<dbReference type="PIR" id="A28151">
    <property type="entry name" value="A28151"/>
</dbReference>
<dbReference type="PDB" id="1X9F">
    <property type="method" value="X-ray"/>
    <property type="resolution" value="2.60 A"/>
    <property type="chains" value="A/E/I=1-151"/>
</dbReference>
<dbReference type="PDB" id="2GTL">
    <property type="method" value="X-ray"/>
    <property type="resolution" value="3.50 A"/>
    <property type="chains" value="A/E/I=1-151"/>
</dbReference>
<dbReference type="PDB" id="4V93">
    <property type="method" value="EM"/>
    <property type="resolution" value="8.10 A"/>
    <property type="chains" value="A2/A3/A7/AA/AE/AF/AJ/AK/AO/AP/AT/AU/AY/AZ/Ad/Ae/Ai/Aj/An/Ao/As/At/Ax/Ay=5-151, B1/B6/BD/BI/BN/BS/BX/Bc/Bh/Bm/Br/Bw=1-151"/>
</dbReference>
<dbReference type="PDB" id="5M3L">
    <property type="method" value="EM"/>
    <property type="resolution" value="3.80 A"/>
    <property type="chains" value="A/E/I=1-151"/>
</dbReference>
<dbReference type="PDBsum" id="1X9F"/>
<dbReference type="PDBsum" id="2GTL"/>
<dbReference type="PDBsum" id="4V93"/>
<dbReference type="PDBsum" id="5M3L"/>
<dbReference type="SMR" id="P13579"/>
<dbReference type="DIP" id="DIP-29122N"/>
<dbReference type="IntAct" id="P13579">
    <property type="interactions" value="1"/>
</dbReference>
<dbReference type="EvolutionaryTrace" id="P13579"/>
<dbReference type="GO" id="GO:0005576">
    <property type="term" value="C:extracellular region"/>
    <property type="evidence" value="ECO:0007669"/>
    <property type="project" value="UniProtKB-SubCell"/>
</dbReference>
<dbReference type="GO" id="GO:0005833">
    <property type="term" value="C:hemoglobin complex"/>
    <property type="evidence" value="ECO:0007669"/>
    <property type="project" value="InterPro"/>
</dbReference>
<dbReference type="GO" id="GO:0020037">
    <property type="term" value="F:heme binding"/>
    <property type="evidence" value="ECO:0007669"/>
    <property type="project" value="InterPro"/>
</dbReference>
<dbReference type="GO" id="GO:0005506">
    <property type="term" value="F:iron ion binding"/>
    <property type="evidence" value="ECO:0007669"/>
    <property type="project" value="InterPro"/>
</dbReference>
<dbReference type="GO" id="GO:0019825">
    <property type="term" value="F:oxygen binding"/>
    <property type="evidence" value="ECO:0007669"/>
    <property type="project" value="InterPro"/>
</dbReference>
<dbReference type="GO" id="GO:0005344">
    <property type="term" value="F:oxygen carrier activity"/>
    <property type="evidence" value="ECO:0007669"/>
    <property type="project" value="UniProtKB-KW"/>
</dbReference>
<dbReference type="CDD" id="cd01040">
    <property type="entry name" value="Mb-like"/>
    <property type="match status" value="1"/>
</dbReference>
<dbReference type="Gene3D" id="1.10.490.10">
    <property type="entry name" value="Globins"/>
    <property type="match status" value="1"/>
</dbReference>
<dbReference type="InterPro" id="IPR000971">
    <property type="entry name" value="Globin"/>
</dbReference>
<dbReference type="InterPro" id="IPR009050">
    <property type="entry name" value="Globin-like_sf"/>
</dbReference>
<dbReference type="InterPro" id="IPR012292">
    <property type="entry name" value="Globin/Proto"/>
</dbReference>
<dbReference type="InterPro" id="IPR014610">
    <property type="entry name" value="Haemoglobin_extracell"/>
</dbReference>
<dbReference type="InterPro" id="IPR044399">
    <property type="entry name" value="Mb-like_M"/>
</dbReference>
<dbReference type="Pfam" id="PF00042">
    <property type="entry name" value="Globin"/>
    <property type="match status" value="1"/>
</dbReference>
<dbReference type="PIRSF" id="PIRSF036517">
    <property type="entry name" value="Ext_hemo"/>
    <property type="match status" value="1"/>
</dbReference>
<dbReference type="SUPFAM" id="SSF46458">
    <property type="entry name" value="Globin-like"/>
    <property type="match status" value="1"/>
</dbReference>
<dbReference type="PROSITE" id="PS01033">
    <property type="entry name" value="GLOBIN"/>
    <property type="match status" value="1"/>
</dbReference>
<protein>
    <recommendedName>
        <fullName>Extracellular globin-4</fullName>
    </recommendedName>
    <alternativeName>
        <fullName>Erythrocruorin</fullName>
    </alternativeName>
    <alternativeName>
        <fullName>Globin A</fullName>
    </alternativeName>
    <alternativeName>
        <fullName>Globin IV</fullName>
    </alternativeName>
</protein>
<name>GLB4_LUMTE</name>
<feature type="chain" id="PRO_0000052515" description="Extracellular globin-4">
    <location>
        <begin position="1"/>
        <end position="151"/>
    </location>
</feature>
<feature type="domain" description="Globin" evidence="2">
    <location>
        <begin position="6"/>
        <end position="151"/>
    </location>
</feature>
<feature type="binding site" description="proximal binding residue">
    <location>
        <position position="101"/>
    </location>
    <ligand>
        <name>heme b</name>
        <dbReference type="ChEBI" id="CHEBI:60344"/>
    </ligand>
    <ligandPart>
        <name>Fe</name>
        <dbReference type="ChEBI" id="CHEBI:18248"/>
    </ligandPart>
</feature>
<feature type="disulfide bond" description="Interchain (with chain III)" evidence="1">
    <location>
        <position position="6"/>
    </location>
</feature>
<feature type="disulfide bond" evidence="1">
    <location>
        <begin position="7"/>
        <end position="138"/>
    </location>
</feature>
<feature type="disulfide bond" description="Interchain (with chain I)" evidence="1">
    <location>
        <position position="129"/>
    </location>
</feature>
<feature type="helix" evidence="4">
    <location>
        <begin position="9"/>
        <end position="22"/>
    </location>
</feature>
<feature type="strand" evidence="4">
    <location>
        <begin position="26"/>
        <end position="28"/>
    </location>
</feature>
<feature type="helix" evidence="4">
    <location>
        <begin position="29"/>
        <end position="45"/>
    </location>
</feature>
<feature type="helix" evidence="4">
    <location>
        <begin position="47"/>
        <end position="53"/>
    </location>
</feature>
<feature type="turn" evidence="4">
    <location>
        <begin position="54"/>
        <end position="59"/>
    </location>
</feature>
<feature type="helix" evidence="4">
    <location>
        <begin position="65"/>
        <end position="81"/>
    </location>
</feature>
<feature type="turn" evidence="4">
    <location>
        <begin position="82"/>
        <end position="85"/>
    </location>
</feature>
<feature type="helix" evidence="4">
    <location>
        <begin position="87"/>
        <end position="102"/>
    </location>
</feature>
<feature type="helix" evidence="4">
    <location>
        <begin position="109"/>
        <end position="126"/>
    </location>
</feature>
<feature type="strand" evidence="5">
    <location>
        <begin position="127"/>
        <end position="129"/>
    </location>
</feature>
<feature type="helix" evidence="4">
    <location>
        <begin position="132"/>
        <end position="146"/>
    </location>
</feature>
<feature type="turn" evidence="4">
    <location>
        <begin position="147"/>
        <end position="149"/>
    </location>
</feature>
<accession>P13579</accession>
<reference key="1">
    <citation type="journal article" date="1988" name="J. Biol. Chem.">
        <title>The amino acid sequences of chains a, b, and c that form the trimer subunit of the extracellular hemoglobin from Lumbricus terrestris.</title>
        <authorList>
            <person name="Fushitani K."/>
            <person name="Matsuura M.S.A."/>
            <person name="Riggs A.F."/>
        </authorList>
    </citation>
    <scope>PROTEIN SEQUENCE</scope>
</reference>
<reference key="2">
    <citation type="journal article" date="1996" name="Biochim. Biophys. Acta">
        <title>Characterization of the constituent polypeptides of the extracellular hemoglobin from Lumbricus terrestris: heterogeneity and discovery of a new linker chain L4.</title>
        <authorList>
            <person name="Fushitani K."/>
            <person name="Higashiyama K."/>
            <person name="Asao M."/>
            <person name="Hosokawa K."/>
        </authorList>
    </citation>
    <scope>PROTEIN SEQUENCE OF 1-10</scope>
</reference>
<reference key="3">
    <citation type="journal article" date="2004" name="J. Mol. Biol.">
        <title>Crystal structure of the hemoglobin dodecamer from Lumbricus erythrocruorin: allosteric core of giant annelid respiratory complexes.</title>
        <authorList>
            <person name="Strand K."/>
            <person name="Knapp J.E."/>
            <person name="Bhyravbhatla B."/>
            <person name="Royer W.E. Jr."/>
        </authorList>
    </citation>
    <scope>X-RAY CRYSTALLOGRAPHY (2.60 ANGSTROMS) IN COMPLEX WITH HEME</scope>
    <scope>SUBUNIT</scope>
</reference>
<sequence>ADDEDCCSYEDRREIRHIWDDVWSSSFTDRRVAIVRAVFDDLFKHYPTSKALFERVKIDEPESGEFKSHLVRVANGLDLLINLLDDTLVLQSHLGHLADQHIQRKGVTKEYFRGIGEAFARVLPQVLSCFNVDAWNRCFHRLVARIAKDLP</sequence>
<organism>
    <name type="scientific">Lumbricus terrestris</name>
    <name type="common">Common earthworm</name>
    <dbReference type="NCBI Taxonomy" id="6398"/>
    <lineage>
        <taxon>Eukaryota</taxon>
        <taxon>Metazoa</taxon>
        <taxon>Spiralia</taxon>
        <taxon>Lophotrochozoa</taxon>
        <taxon>Annelida</taxon>
        <taxon>Clitellata</taxon>
        <taxon>Oligochaeta</taxon>
        <taxon>Crassiclitellata</taxon>
        <taxon>Lumbricina</taxon>
        <taxon>Lumbricidae</taxon>
        <taxon>Lumbricinae</taxon>
        <taxon>Lumbricus</taxon>
    </lineage>
</organism>
<comment type="subunit">
    <text evidence="3">The extracellular hemoglobin of the earthworm consists of 12 subunits that have a hexagonal bilayer structure with a molecular weight near 3.8 million. Each one-twelfth subunit is composed primarily of disulfide linked trimers (chains A, B, and C) and monomers (chain D).</text>
</comment>
<comment type="subcellular location">
    <subcellularLocation>
        <location>Secreted</location>
    </subcellularLocation>
</comment>
<comment type="similarity">
    <text evidence="2">Belongs to the globin family.</text>
</comment>
<keyword id="KW-0002">3D-structure</keyword>
<keyword id="KW-0903">Direct protein sequencing</keyword>
<keyword id="KW-1015">Disulfide bond</keyword>
<keyword id="KW-0349">Heme</keyword>
<keyword id="KW-0408">Iron</keyword>
<keyword id="KW-0479">Metal-binding</keyword>
<keyword id="KW-0561">Oxygen transport</keyword>
<keyword id="KW-0964">Secreted</keyword>
<keyword id="KW-0813">Transport</keyword>
<evidence type="ECO:0000250" key="1"/>
<evidence type="ECO:0000255" key="2">
    <source>
        <dbReference type="PROSITE-ProRule" id="PRU00238"/>
    </source>
</evidence>
<evidence type="ECO:0000269" key="3">
    <source>
    </source>
</evidence>
<evidence type="ECO:0007829" key="4">
    <source>
        <dbReference type="PDB" id="1X9F"/>
    </source>
</evidence>
<evidence type="ECO:0007829" key="5">
    <source>
        <dbReference type="PDB" id="2GTL"/>
    </source>
</evidence>
<proteinExistence type="evidence at protein level"/>